<reference key="1">
    <citation type="journal article" date="2002" name="Nucleic Acids Res.">
        <title>Genome sequence of Shigella flexneri 2a: insights into pathogenicity through comparison with genomes of Escherichia coli K12 and O157.</title>
        <authorList>
            <person name="Jin Q."/>
            <person name="Yuan Z."/>
            <person name="Xu J."/>
            <person name="Wang Y."/>
            <person name="Shen Y."/>
            <person name="Lu W."/>
            <person name="Wang J."/>
            <person name="Liu H."/>
            <person name="Yang J."/>
            <person name="Yang F."/>
            <person name="Zhang X."/>
            <person name="Zhang J."/>
            <person name="Yang G."/>
            <person name="Wu H."/>
            <person name="Qu D."/>
            <person name="Dong J."/>
            <person name="Sun L."/>
            <person name="Xue Y."/>
            <person name="Zhao A."/>
            <person name="Gao Y."/>
            <person name="Zhu J."/>
            <person name="Kan B."/>
            <person name="Ding K."/>
            <person name="Chen S."/>
            <person name="Cheng H."/>
            <person name="Yao Z."/>
            <person name="He B."/>
            <person name="Chen R."/>
            <person name="Ma D."/>
            <person name="Qiang B."/>
            <person name="Wen Y."/>
            <person name="Hou Y."/>
            <person name="Yu J."/>
        </authorList>
    </citation>
    <scope>NUCLEOTIDE SEQUENCE [LARGE SCALE GENOMIC DNA]</scope>
    <source>
        <strain>301 / Serotype 2a</strain>
    </source>
</reference>
<reference key="2">
    <citation type="journal article" date="2003" name="Infect. Immun.">
        <title>Complete genome sequence and comparative genomics of Shigella flexneri serotype 2a strain 2457T.</title>
        <authorList>
            <person name="Wei J."/>
            <person name="Goldberg M.B."/>
            <person name="Burland V."/>
            <person name="Venkatesan M.M."/>
            <person name="Deng W."/>
            <person name="Fournier G."/>
            <person name="Mayhew G.F."/>
            <person name="Plunkett G. III"/>
            <person name="Rose D.J."/>
            <person name="Darling A."/>
            <person name="Mau B."/>
            <person name="Perna N.T."/>
            <person name="Payne S.M."/>
            <person name="Runyen-Janecky L.J."/>
            <person name="Zhou S."/>
            <person name="Schwartz D.C."/>
            <person name="Blattner F.R."/>
        </authorList>
    </citation>
    <scope>NUCLEOTIDE SEQUENCE [LARGE SCALE GENOMIC DNA]</scope>
    <source>
        <strain>ATCC 700930 / 2457T / Serotype 2a</strain>
    </source>
</reference>
<proteinExistence type="inferred from homology"/>
<sequence>MRSKYIVIEGLEGAGKTTARNVVVETLEQLGIRDMVFTREPGGTQLAEKLRSLVLDIKSVGDEVITDKAEVLMFYAARVQLVETVIKPALANGTWVIGDRHDLSTQAYQGGGRGIDQHMLATLRDAVLGDFRPDLTLYLDVTPEVGLKRARARGELDRIEQESFDFFNRTRARYLELAAQDKSIHTIDATQPLEAVMDAIRTTVTHWVKELDA</sequence>
<dbReference type="EC" id="2.7.4.9"/>
<dbReference type="EMBL" id="AE005674">
    <property type="protein sequence ID" value="AAN42721.1"/>
    <property type="molecule type" value="Genomic_DNA"/>
</dbReference>
<dbReference type="EMBL" id="AE014073">
    <property type="protein sequence ID" value="AAP16609.1"/>
    <property type="molecule type" value="Genomic_DNA"/>
</dbReference>
<dbReference type="RefSeq" id="NP_707014.1">
    <property type="nucleotide sequence ID" value="NC_004337.2"/>
</dbReference>
<dbReference type="RefSeq" id="WP_001257000.1">
    <property type="nucleotide sequence ID" value="NZ_WPGW01000001.1"/>
</dbReference>
<dbReference type="SMR" id="P0A721"/>
<dbReference type="STRING" id="198214.SF1102"/>
<dbReference type="DrugBank" id="DB03280">
    <property type="generic name" value="p1-(5'-adenosyl)p5-(5'-thymidyl)pentaphosphate"/>
</dbReference>
<dbReference type="PaxDb" id="198214-SF1102"/>
<dbReference type="GeneID" id="1024058"/>
<dbReference type="GeneID" id="93776310"/>
<dbReference type="KEGG" id="sfl:SF1102"/>
<dbReference type="KEGG" id="sfx:S1182"/>
<dbReference type="PATRIC" id="fig|198214.7.peg.1290"/>
<dbReference type="HOGENOM" id="CLU_049131_0_1_6"/>
<dbReference type="UniPathway" id="UPA00575"/>
<dbReference type="Proteomes" id="UP000001006">
    <property type="component" value="Chromosome"/>
</dbReference>
<dbReference type="Proteomes" id="UP000002673">
    <property type="component" value="Chromosome"/>
</dbReference>
<dbReference type="GO" id="GO:0005829">
    <property type="term" value="C:cytosol"/>
    <property type="evidence" value="ECO:0007669"/>
    <property type="project" value="TreeGrafter"/>
</dbReference>
<dbReference type="GO" id="GO:0005524">
    <property type="term" value="F:ATP binding"/>
    <property type="evidence" value="ECO:0007669"/>
    <property type="project" value="UniProtKB-UniRule"/>
</dbReference>
<dbReference type="GO" id="GO:0004798">
    <property type="term" value="F:dTMP kinase activity"/>
    <property type="evidence" value="ECO:0007669"/>
    <property type="project" value="UniProtKB-UniRule"/>
</dbReference>
<dbReference type="GO" id="GO:0006233">
    <property type="term" value="P:dTDP biosynthetic process"/>
    <property type="evidence" value="ECO:0007669"/>
    <property type="project" value="InterPro"/>
</dbReference>
<dbReference type="GO" id="GO:0006235">
    <property type="term" value="P:dTTP biosynthetic process"/>
    <property type="evidence" value="ECO:0007669"/>
    <property type="project" value="UniProtKB-UniRule"/>
</dbReference>
<dbReference type="GO" id="GO:0006227">
    <property type="term" value="P:dUDP biosynthetic process"/>
    <property type="evidence" value="ECO:0007669"/>
    <property type="project" value="TreeGrafter"/>
</dbReference>
<dbReference type="CDD" id="cd01672">
    <property type="entry name" value="TMPK"/>
    <property type="match status" value="1"/>
</dbReference>
<dbReference type="FunFam" id="3.40.50.300:FF:000321">
    <property type="entry name" value="Thymidylate kinase"/>
    <property type="match status" value="1"/>
</dbReference>
<dbReference type="Gene3D" id="3.40.50.300">
    <property type="entry name" value="P-loop containing nucleotide triphosphate hydrolases"/>
    <property type="match status" value="1"/>
</dbReference>
<dbReference type="HAMAP" id="MF_00165">
    <property type="entry name" value="Thymidylate_kinase"/>
    <property type="match status" value="1"/>
</dbReference>
<dbReference type="InterPro" id="IPR027417">
    <property type="entry name" value="P-loop_NTPase"/>
</dbReference>
<dbReference type="InterPro" id="IPR039430">
    <property type="entry name" value="Thymidylate_kin-like_dom"/>
</dbReference>
<dbReference type="InterPro" id="IPR018095">
    <property type="entry name" value="Thymidylate_kin_CS"/>
</dbReference>
<dbReference type="InterPro" id="IPR018094">
    <property type="entry name" value="Thymidylate_kinase"/>
</dbReference>
<dbReference type="NCBIfam" id="TIGR00041">
    <property type="entry name" value="DTMP_kinase"/>
    <property type="match status" value="1"/>
</dbReference>
<dbReference type="PANTHER" id="PTHR10344">
    <property type="entry name" value="THYMIDYLATE KINASE"/>
    <property type="match status" value="1"/>
</dbReference>
<dbReference type="PANTHER" id="PTHR10344:SF4">
    <property type="entry name" value="UMP-CMP KINASE 2, MITOCHONDRIAL"/>
    <property type="match status" value="1"/>
</dbReference>
<dbReference type="Pfam" id="PF02223">
    <property type="entry name" value="Thymidylate_kin"/>
    <property type="match status" value="1"/>
</dbReference>
<dbReference type="SUPFAM" id="SSF52540">
    <property type="entry name" value="P-loop containing nucleoside triphosphate hydrolases"/>
    <property type="match status" value="1"/>
</dbReference>
<dbReference type="PROSITE" id="PS01331">
    <property type="entry name" value="THYMIDYLATE_KINASE"/>
    <property type="match status" value="1"/>
</dbReference>
<keyword id="KW-0067">ATP-binding</keyword>
<keyword id="KW-0418">Kinase</keyword>
<keyword id="KW-0545">Nucleotide biosynthesis</keyword>
<keyword id="KW-0547">Nucleotide-binding</keyword>
<keyword id="KW-1185">Reference proteome</keyword>
<keyword id="KW-0808">Transferase</keyword>
<comment type="function">
    <text evidence="1">Catalyzes the reversible phosphorylation of deoxythymidine monophosphate (dTMP) to deoxythymidine diphosphate (dTDP), using ATP as its preferred phosphoryl donor. Situated at the junction of both de novo and salvage pathways of deoxythymidine triphosphate (dTTP) synthesis, is essential for DNA synthesis and cellular growth (By similarity).</text>
</comment>
<comment type="catalytic activity">
    <reaction>
        <text>dTMP + ATP = dTDP + ADP</text>
        <dbReference type="Rhea" id="RHEA:13517"/>
        <dbReference type="ChEBI" id="CHEBI:30616"/>
        <dbReference type="ChEBI" id="CHEBI:58369"/>
        <dbReference type="ChEBI" id="CHEBI:63528"/>
        <dbReference type="ChEBI" id="CHEBI:456216"/>
        <dbReference type="EC" id="2.7.4.9"/>
    </reaction>
</comment>
<comment type="pathway">
    <text>Pyrimidine metabolism; dTTP biosynthesis.</text>
</comment>
<comment type="subunit">
    <text evidence="1">Homodimer.</text>
</comment>
<comment type="domain">
    <text evidence="1">The LID domain is a solvent-exposed domain that closes over the site of phosphoryl transfer upon ATP binding.</text>
</comment>
<comment type="similarity">
    <text evidence="3">Belongs to the thymidylate kinase family.</text>
</comment>
<gene>
    <name type="primary">tmk</name>
    <name type="ordered locus">SF1102</name>
    <name type="ordered locus">S1182</name>
</gene>
<protein>
    <recommendedName>
        <fullName>Thymidylate kinase</fullName>
        <ecNumber>2.7.4.9</ecNumber>
    </recommendedName>
    <alternativeName>
        <fullName>Thymidine monophosphate kinase</fullName>
    </alternativeName>
    <alternativeName>
        <fullName>dTMP kinase</fullName>
        <shortName>TMPK</shortName>
    </alternativeName>
</protein>
<name>KTHY_SHIFL</name>
<evidence type="ECO:0000250" key="1"/>
<evidence type="ECO:0000255" key="2"/>
<evidence type="ECO:0000305" key="3"/>
<accession>P0A721</accession>
<accession>P37345</accession>
<feature type="chain" id="PRO_0000155337" description="Thymidylate kinase">
    <location>
        <begin position="1"/>
        <end position="213"/>
    </location>
</feature>
<feature type="region of interest" description="LID">
    <location>
        <begin position="147"/>
        <end position="159"/>
    </location>
</feature>
<feature type="binding site" evidence="1">
    <location>
        <begin position="10"/>
        <end position="17"/>
    </location>
    <ligand>
        <name>ATP</name>
        <dbReference type="ChEBI" id="CHEBI:30616"/>
    </ligand>
</feature>
<feature type="binding site" evidence="1">
    <location>
        <position position="12"/>
    </location>
    <ligand>
        <name>dTMP</name>
        <dbReference type="ChEBI" id="CHEBI:63528"/>
    </ligand>
</feature>
<feature type="binding site" evidence="1">
    <location>
        <position position="74"/>
    </location>
    <ligand>
        <name>dTMP</name>
        <dbReference type="ChEBI" id="CHEBI:63528"/>
    </ligand>
</feature>
<feature type="binding site" evidence="1">
    <location>
        <position position="78"/>
    </location>
    <ligand>
        <name>dTMP</name>
        <dbReference type="ChEBI" id="CHEBI:63528"/>
    </ligand>
</feature>
<feature type="binding site" evidence="1">
    <location>
        <position position="100"/>
    </location>
    <ligand>
        <name>dTMP</name>
        <dbReference type="ChEBI" id="CHEBI:63528"/>
    </ligand>
</feature>
<feature type="binding site" evidence="1">
    <location>
        <position position="105"/>
    </location>
    <ligand>
        <name>dTMP</name>
        <dbReference type="ChEBI" id="CHEBI:63528"/>
    </ligand>
</feature>
<feature type="binding site" evidence="1">
    <location>
        <position position="108"/>
    </location>
    <ligand>
        <name>dTMP</name>
        <dbReference type="ChEBI" id="CHEBI:63528"/>
    </ligand>
</feature>
<feature type="binding site" evidence="1">
    <location>
        <position position="109"/>
    </location>
    <ligand>
        <name>dTMP</name>
        <dbReference type="ChEBI" id="CHEBI:63528"/>
    </ligand>
</feature>
<feature type="site" description="Transition state stabilizer" evidence="2">
    <location>
        <position position="153"/>
    </location>
</feature>
<organism>
    <name type="scientific">Shigella flexneri</name>
    <dbReference type="NCBI Taxonomy" id="623"/>
    <lineage>
        <taxon>Bacteria</taxon>
        <taxon>Pseudomonadati</taxon>
        <taxon>Pseudomonadota</taxon>
        <taxon>Gammaproteobacteria</taxon>
        <taxon>Enterobacterales</taxon>
        <taxon>Enterobacteriaceae</taxon>
        <taxon>Shigella</taxon>
    </lineage>
</organism>